<comment type="function">
    <text evidence="1">Catalyzes the methylthiolation of N6-(dimethylallyl)adenosine (i(6)A), leading to the formation of 2-methylthio-N6-(dimethylallyl)adenosine (ms(2)i(6)A) at position 37 in tRNAs that read codons beginning with uridine.</text>
</comment>
<comment type="catalytic activity">
    <reaction evidence="1">
        <text>N(6)-dimethylallyladenosine(37) in tRNA + (sulfur carrier)-SH + AH2 + 2 S-adenosyl-L-methionine = 2-methylsulfanyl-N(6)-dimethylallyladenosine(37) in tRNA + (sulfur carrier)-H + 5'-deoxyadenosine + L-methionine + A + S-adenosyl-L-homocysteine + 2 H(+)</text>
        <dbReference type="Rhea" id="RHEA:37067"/>
        <dbReference type="Rhea" id="RHEA-COMP:10375"/>
        <dbReference type="Rhea" id="RHEA-COMP:10376"/>
        <dbReference type="Rhea" id="RHEA-COMP:14737"/>
        <dbReference type="Rhea" id="RHEA-COMP:14739"/>
        <dbReference type="ChEBI" id="CHEBI:13193"/>
        <dbReference type="ChEBI" id="CHEBI:15378"/>
        <dbReference type="ChEBI" id="CHEBI:17319"/>
        <dbReference type="ChEBI" id="CHEBI:17499"/>
        <dbReference type="ChEBI" id="CHEBI:29917"/>
        <dbReference type="ChEBI" id="CHEBI:57844"/>
        <dbReference type="ChEBI" id="CHEBI:57856"/>
        <dbReference type="ChEBI" id="CHEBI:59789"/>
        <dbReference type="ChEBI" id="CHEBI:64428"/>
        <dbReference type="ChEBI" id="CHEBI:74415"/>
        <dbReference type="ChEBI" id="CHEBI:74417"/>
        <dbReference type="EC" id="2.8.4.3"/>
    </reaction>
</comment>
<comment type="cofactor">
    <cofactor evidence="1">
        <name>[4Fe-4S] cluster</name>
        <dbReference type="ChEBI" id="CHEBI:49883"/>
    </cofactor>
    <text evidence="1">Binds 2 [4Fe-4S] clusters. One cluster is coordinated with 3 cysteines and an exchangeable S-adenosyl-L-methionine.</text>
</comment>
<comment type="subunit">
    <text evidence="1">Monomer.</text>
</comment>
<comment type="subcellular location">
    <subcellularLocation>
        <location evidence="1">Cytoplasm</location>
    </subcellularLocation>
</comment>
<comment type="similarity">
    <text evidence="1">Belongs to the methylthiotransferase family. MiaB subfamily.</text>
</comment>
<comment type="sequence caution" evidence="4">
    <conflict type="erroneous initiation">
        <sequence resource="EMBL-CDS" id="ABO66531"/>
    </conflict>
</comment>
<evidence type="ECO:0000255" key="1">
    <source>
        <dbReference type="HAMAP-Rule" id="MF_01864"/>
    </source>
</evidence>
<evidence type="ECO:0000255" key="2">
    <source>
        <dbReference type="PROSITE-ProRule" id="PRU01266"/>
    </source>
</evidence>
<evidence type="ECO:0000256" key="3">
    <source>
        <dbReference type="SAM" id="MobiDB-lite"/>
    </source>
</evidence>
<evidence type="ECO:0000305" key="4"/>
<protein>
    <recommendedName>
        <fullName evidence="1">tRNA-2-methylthio-N(6)-dimethylallyladenosine synthase</fullName>
        <ecNumber evidence="1">2.8.4.3</ecNumber>
    </recommendedName>
    <alternativeName>
        <fullName evidence="1">(Dimethylallyl)adenosine tRNA methylthiotransferase MiaB</fullName>
    </alternativeName>
    <alternativeName>
        <fullName evidence="1">tRNA-i(6)A37 methylthiotransferase</fullName>
    </alternativeName>
</protein>
<proteinExistence type="inferred from homology"/>
<keyword id="KW-0004">4Fe-4S</keyword>
<keyword id="KW-0963">Cytoplasm</keyword>
<keyword id="KW-0408">Iron</keyword>
<keyword id="KW-0411">Iron-sulfur</keyword>
<keyword id="KW-0479">Metal-binding</keyword>
<keyword id="KW-0949">S-adenosyl-L-methionine</keyword>
<keyword id="KW-0808">Transferase</keyword>
<keyword id="KW-0819">tRNA processing</keyword>
<name>MIAB_GEOTN</name>
<sequence length="523" mass="60052">MNEKQRLEQTGQIQTASHPADRKSDLERLKAKTTKDYEKYFTSVFLPPNLKEAKKRGKEEVQYVKDFTIPDEFRGMGRGRKFYIRTYGCQMNEHDTEVMAGIFMALGYEPTDRPEDANVILLNTCAIRENAENKVFGELGYLKPLKTTNPDLLLGVCGCMSQEEAVVNKILKQYQYVDLIFGTHNIHRLPYILHEAYMSKEMVVEVWSKEGDVVENLPKVRKGNIKAWVNIMYGCDKFCTYCIVPYTRGKERSRRPEDIIQEVRQLAAQGYKEITLLGQNVNAYGKDFNDIQYGLGDLMDELRKIDIARIRFTTSHPRDFDDRLIEVLAKRGNLVEHIHLPVQSGSTEILKMMGRKYTREEYLELVRKIKAAIPDVALTTDIIVGFPNETDEQFEETLSLYREVEFDSAYTFIYSPREGTPAAKMNDNVPMEVKKERLQRLNALVQEIAAKKMKQYEGQVVEVLVEGESKTNPDVLAGYTRKNKLVHFVGPKSLIGQLVNVRITQAKTWTLTGELANEAIEVN</sequence>
<reference key="1">
    <citation type="journal article" date="2007" name="Proc. Natl. Acad. Sci. U.S.A.">
        <title>Genome and proteome of long-chain alkane degrading Geobacillus thermodenitrificans NG80-2 isolated from a deep-subsurface oil reservoir.</title>
        <authorList>
            <person name="Feng L."/>
            <person name="Wang W."/>
            <person name="Cheng J."/>
            <person name="Ren Y."/>
            <person name="Zhao G."/>
            <person name="Gao C."/>
            <person name="Tang Y."/>
            <person name="Liu X."/>
            <person name="Han W."/>
            <person name="Peng X."/>
            <person name="Liu R."/>
            <person name="Wang L."/>
        </authorList>
    </citation>
    <scope>NUCLEOTIDE SEQUENCE [LARGE SCALE GENOMIC DNA]</scope>
    <source>
        <strain>NG80-2</strain>
    </source>
</reference>
<feature type="chain" id="PRO_0000374316" description="tRNA-2-methylthio-N(6)-dimethylallyladenosine synthase">
    <location>
        <begin position="1"/>
        <end position="523"/>
    </location>
</feature>
<feature type="domain" description="MTTase N-terminal" evidence="1">
    <location>
        <begin position="80"/>
        <end position="198"/>
    </location>
</feature>
<feature type="domain" description="Radical SAM core" evidence="2">
    <location>
        <begin position="221"/>
        <end position="451"/>
    </location>
</feature>
<feature type="domain" description="TRAM" evidence="1">
    <location>
        <begin position="454"/>
        <end position="517"/>
    </location>
</feature>
<feature type="region of interest" description="Disordered" evidence="3">
    <location>
        <begin position="1"/>
        <end position="26"/>
    </location>
</feature>
<feature type="compositionally biased region" description="Polar residues" evidence="3">
    <location>
        <begin position="8"/>
        <end position="17"/>
    </location>
</feature>
<feature type="binding site" evidence="1">
    <location>
        <position position="89"/>
    </location>
    <ligand>
        <name>[4Fe-4S] cluster</name>
        <dbReference type="ChEBI" id="CHEBI:49883"/>
        <label>1</label>
    </ligand>
</feature>
<feature type="binding site" evidence="1">
    <location>
        <position position="125"/>
    </location>
    <ligand>
        <name>[4Fe-4S] cluster</name>
        <dbReference type="ChEBI" id="CHEBI:49883"/>
        <label>1</label>
    </ligand>
</feature>
<feature type="binding site" evidence="1">
    <location>
        <position position="159"/>
    </location>
    <ligand>
        <name>[4Fe-4S] cluster</name>
        <dbReference type="ChEBI" id="CHEBI:49883"/>
        <label>1</label>
    </ligand>
</feature>
<feature type="binding site" evidence="1">
    <location>
        <position position="235"/>
    </location>
    <ligand>
        <name>[4Fe-4S] cluster</name>
        <dbReference type="ChEBI" id="CHEBI:49883"/>
        <label>2</label>
        <note>4Fe-4S-S-AdoMet</note>
    </ligand>
</feature>
<feature type="binding site" evidence="1">
    <location>
        <position position="239"/>
    </location>
    <ligand>
        <name>[4Fe-4S] cluster</name>
        <dbReference type="ChEBI" id="CHEBI:49883"/>
        <label>2</label>
        <note>4Fe-4S-S-AdoMet</note>
    </ligand>
</feature>
<feature type="binding site" evidence="1">
    <location>
        <position position="242"/>
    </location>
    <ligand>
        <name>[4Fe-4S] cluster</name>
        <dbReference type="ChEBI" id="CHEBI:49883"/>
        <label>2</label>
        <note>4Fe-4S-S-AdoMet</note>
    </ligand>
</feature>
<organism>
    <name type="scientific">Geobacillus thermodenitrificans (strain NG80-2)</name>
    <dbReference type="NCBI Taxonomy" id="420246"/>
    <lineage>
        <taxon>Bacteria</taxon>
        <taxon>Bacillati</taxon>
        <taxon>Bacillota</taxon>
        <taxon>Bacilli</taxon>
        <taxon>Bacillales</taxon>
        <taxon>Anoxybacillaceae</taxon>
        <taxon>Geobacillus</taxon>
    </lineage>
</organism>
<gene>
    <name evidence="1" type="primary">miaB</name>
    <name type="ordered locus">GTNG_1157</name>
</gene>
<accession>A4IMH7</accession>
<dbReference type="EC" id="2.8.4.3" evidence="1"/>
<dbReference type="EMBL" id="CP000557">
    <property type="protein sequence ID" value="ABO66531.1"/>
    <property type="status" value="ALT_INIT"/>
    <property type="molecule type" value="Genomic_DNA"/>
</dbReference>
<dbReference type="RefSeq" id="WP_008878502.1">
    <property type="nucleotide sequence ID" value="NC_009328.1"/>
</dbReference>
<dbReference type="SMR" id="A4IMH7"/>
<dbReference type="GeneID" id="87621252"/>
<dbReference type="KEGG" id="gtn:GTNG_1157"/>
<dbReference type="eggNOG" id="COG0621">
    <property type="taxonomic scope" value="Bacteria"/>
</dbReference>
<dbReference type="HOGENOM" id="CLU_018697_2_0_9"/>
<dbReference type="Proteomes" id="UP000001578">
    <property type="component" value="Chromosome"/>
</dbReference>
<dbReference type="GO" id="GO:0005829">
    <property type="term" value="C:cytosol"/>
    <property type="evidence" value="ECO:0007669"/>
    <property type="project" value="TreeGrafter"/>
</dbReference>
<dbReference type="GO" id="GO:0051539">
    <property type="term" value="F:4 iron, 4 sulfur cluster binding"/>
    <property type="evidence" value="ECO:0007669"/>
    <property type="project" value="UniProtKB-UniRule"/>
</dbReference>
<dbReference type="GO" id="GO:0046872">
    <property type="term" value="F:metal ion binding"/>
    <property type="evidence" value="ECO:0007669"/>
    <property type="project" value="UniProtKB-KW"/>
</dbReference>
<dbReference type="GO" id="GO:0035597">
    <property type="term" value="F:N6-isopentenyladenosine methylthiotransferase activity"/>
    <property type="evidence" value="ECO:0007669"/>
    <property type="project" value="TreeGrafter"/>
</dbReference>
<dbReference type="CDD" id="cd01335">
    <property type="entry name" value="Radical_SAM"/>
    <property type="match status" value="1"/>
</dbReference>
<dbReference type="FunFam" id="3.40.50.12160:FF:000006">
    <property type="entry name" value="tRNA-2-methylthio-N(6)-dimethylallyladenosine synthase"/>
    <property type="match status" value="1"/>
</dbReference>
<dbReference type="FunFam" id="3.80.30.20:FF:000001">
    <property type="entry name" value="tRNA-2-methylthio-N(6)-dimethylallyladenosine synthase 2"/>
    <property type="match status" value="1"/>
</dbReference>
<dbReference type="Gene3D" id="3.40.50.12160">
    <property type="entry name" value="Methylthiotransferase, N-terminal domain"/>
    <property type="match status" value="1"/>
</dbReference>
<dbReference type="Gene3D" id="3.80.30.20">
    <property type="entry name" value="tm_1862 like domain"/>
    <property type="match status" value="1"/>
</dbReference>
<dbReference type="HAMAP" id="MF_01864">
    <property type="entry name" value="tRNA_metthiotr_MiaB"/>
    <property type="match status" value="1"/>
</dbReference>
<dbReference type="InterPro" id="IPR006638">
    <property type="entry name" value="Elp3/MiaA/NifB-like_rSAM"/>
</dbReference>
<dbReference type="InterPro" id="IPR005839">
    <property type="entry name" value="Methylthiotransferase"/>
</dbReference>
<dbReference type="InterPro" id="IPR020612">
    <property type="entry name" value="Methylthiotransferase_CS"/>
</dbReference>
<dbReference type="InterPro" id="IPR013848">
    <property type="entry name" value="Methylthiotransferase_N"/>
</dbReference>
<dbReference type="InterPro" id="IPR038135">
    <property type="entry name" value="Methylthiotransferase_N_sf"/>
</dbReference>
<dbReference type="InterPro" id="IPR006463">
    <property type="entry name" value="MiaB_methiolase"/>
</dbReference>
<dbReference type="InterPro" id="IPR007197">
    <property type="entry name" value="rSAM"/>
</dbReference>
<dbReference type="InterPro" id="IPR023404">
    <property type="entry name" value="rSAM_horseshoe"/>
</dbReference>
<dbReference type="InterPro" id="IPR002792">
    <property type="entry name" value="TRAM_dom"/>
</dbReference>
<dbReference type="NCBIfam" id="TIGR01574">
    <property type="entry name" value="miaB-methiolase"/>
    <property type="match status" value="1"/>
</dbReference>
<dbReference type="NCBIfam" id="TIGR00089">
    <property type="entry name" value="MiaB/RimO family radical SAM methylthiotransferase"/>
    <property type="match status" value="1"/>
</dbReference>
<dbReference type="PANTHER" id="PTHR43020">
    <property type="entry name" value="CDK5 REGULATORY SUBUNIT-ASSOCIATED PROTEIN 1"/>
    <property type="match status" value="1"/>
</dbReference>
<dbReference type="PANTHER" id="PTHR43020:SF2">
    <property type="entry name" value="MITOCHONDRIAL TRNA METHYLTHIOTRANSFERASE CDK5RAP1"/>
    <property type="match status" value="1"/>
</dbReference>
<dbReference type="Pfam" id="PF04055">
    <property type="entry name" value="Radical_SAM"/>
    <property type="match status" value="1"/>
</dbReference>
<dbReference type="Pfam" id="PF01938">
    <property type="entry name" value="TRAM"/>
    <property type="match status" value="1"/>
</dbReference>
<dbReference type="Pfam" id="PF00919">
    <property type="entry name" value="UPF0004"/>
    <property type="match status" value="1"/>
</dbReference>
<dbReference type="SFLD" id="SFLDF00273">
    <property type="entry name" value="(dimethylallyl)adenosine_tRNA"/>
    <property type="match status" value="1"/>
</dbReference>
<dbReference type="SFLD" id="SFLDG01082">
    <property type="entry name" value="B12-binding_domain_containing"/>
    <property type="match status" value="1"/>
</dbReference>
<dbReference type="SFLD" id="SFLDS00029">
    <property type="entry name" value="Radical_SAM"/>
    <property type="match status" value="1"/>
</dbReference>
<dbReference type="SMART" id="SM00729">
    <property type="entry name" value="Elp3"/>
    <property type="match status" value="1"/>
</dbReference>
<dbReference type="SUPFAM" id="SSF102114">
    <property type="entry name" value="Radical SAM enzymes"/>
    <property type="match status" value="1"/>
</dbReference>
<dbReference type="PROSITE" id="PS51449">
    <property type="entry name" value="MTTASE_N"/>
    <property type="match status" value="1"/>
</dbReference>
<dbReference type="PROSITE" id="PS01278">
    <property type="entry name" value="MTTASE_RADICAL"/>
    <property type="match status" value="1"/>
</dbReference>
<dbReference type="PROSITE" id="PS51918">
    <property type="entry name" value="RADICAL_SAM"/>
    <property type="match status" value="1"/>
</dbReference>
<dbReference type="PROSITE" id="PS50926">
    <property type="entry name" value="TRAM"/>
    <property type="match status" value="1"/>
</dbReference>